<gene>
    <name evidence="1" type="primary">rpsK</name>
    <name type="ordered locus">Spy49_0073</name>
</gene>
<accession>B5XJ61</accession>
<reference key="1">
    <citation type="journal article" date="2008" name="J. Bacteriol.">
        <title>Genome sequence of a nephritogenic and highly transformable M49 strain of Streptococcus pyogenes.</title>
        <authorList>
            <person name="McShan W.M."/>
            <person name="Ferretti J.J."/>
            <person name="Karasawa T."/>
            <person name="Suvorov A.N."/>
            <person name="Lin S."/>
            <person name="Qin B."/>
            <person name="Jia H."/>
            <person name="Kenton S."/>
            <person name="Najar F."/>
            <person name="Wu H."/>
            <person name="Scott J."/>
            <person name="Roe B.A."/>
            <person name="Savic D.J."/>
        </authorList>
    </citation>
    <scope>NUCLEOTIDE SEQUENCE [LARGE SCALE GENOMIC DNA]</scope>
    <source>
        <strain>NZ131</strain>
    </source>
</reference>
<evidence type="ECO:0000255" key="1">
    <source>
        <dbReference type="HAMAP-Rule" id="MF_01310"/>
    </source>
</evidence>
<evidence type="ECO:0000305" key="2"/>
<name>RS11_STRPZ</name>
<protein>
    <recommendedName>
        <fullName evidence="1">Small ribosomal subunit protein uS11</fullName>
    </recommendedName>
    <alternativeName>
        <fullName evidence="2">30S ribosomal protein S11</fullName>
    </alternativeName>
</protein>
<sequence>MAKPTRKRRVKKNIEFGVAHIHATFNNTIVMITDVHGNALAWSSAGALGFKGSRKSTPFAAQMAAEAAAKSAQEHGLKTVEVTVKGPGSGRESAIRALAAAGLEVTAIRDVTPVPHNGARPPKRRRV</sequence>
<dbReference type="EMBL" id="CP000829">
    <property type="protein sequence ID" value="ACI60429.1"/>
    <property type="molecule type" value="Genomic_DNA"/>
</dbReference>
<dbReference type="SMR" id="B5XJ61"/>
<dbReference type="KEGG" id="soz:Spy49_0073"/>
<dbReference type="HOGENOM" id="CLU_072439_5_0_9"/>
<dbReference type="Proteomes" id="UP000001039">
    <property type="component" value="Chromosome"/>
</dbReference>
<dbReference type="GO" id="GO:1990904">
    <property type="term" value="C:ribonucleoprotein complex"/>
    <property type="evidence" value="ECO:0007669"/>
    <property type="project" value="UniProtKB-KW"/>
</dbReference>
<dbReference type="GO" id="GO:0005840">
    <property type="term" value="C:ribosome"/>
    <property type="evidence" value="ECO:0007669"/>
    <property type="project" value="UniProtKB-KW"/>
</dbReference>
<dbReference type="GO" id="GO:0019843">
    <property type="term" value="F:rRNA binding"/>
    <property type="evidence" value="ECO:0007669"/>
    <property type="project" value="UniProtKB-UniRule"/>
</dbReference>
<dbReference type="GO" id="GO:0003735">
    <property type="term" value="F:structural constituent of ribosome"/>
    <property type="evidence" value="ECO:0007669"/>
    <property type="project" value="InterPro"/>
</dbReference>
<dbReference type="GO" id="GO:0006412">
    <property type="term" value="P:translation"/>
    <property type="evidence" value="ECO:0007669"/>
    <property type="project" value="UniProtKB-UniRule"/>
</dbReference>
<dbReference type="FunFam" id="3.30.420.80:FF:000001">
    <property type="entry name" value="30S ribosomal protein S11"/>
    <property type="match status" value="1"/>
</dbReference>
<dbReference type="Gene3D" id="3.30.420.80">
    <property type="entry name" value="Ribosomal protein S11"/>
    <property type="match status" value="1"/>
</dbReference>
<dbReference type="HAMAP" id="MF_01310">
    <property type="entry name" value="Ribosomal_uS11"/>
    <property type="match status" value="1"/>
</dbReference>
<dbReference type="InterPro" id="IPR001971">
    <property type="entry name" value="Ribosomal_uS11"/>
</dbReference>
<dbReference type="InterPro" id="IPR019981">
    <property type="entry name" value="Ribosomal_uS11_bac-type"/>
</dbReference>
<dbReference type="InterPro" id="IPR018102">
    <property type="entry name" value="Ribosomal_uS11_CS"/>
</dbReference>
<dbReference type="InterPro" id="IPR036967">
    <property type="entry name" value="Ribosomal_uS11_sf"/>
</dbReference>
<dbReference type="NCBIfam" id="NF003698">
    <property type="entry name" value="PRK05309.1"/>
    <property type="match status" value="1"/>
</dbReference>
<dbReference type="NCBIfam" id="TIGR03632">
    <property type="entry name" value="uS11_bact"/>
    <property type="match status" value="1"/>
</dbReference>
<dbReference type="PANTHER" id="PTHR11759">
    <property type="entry name" value="40S RIBOSOMAL PROTEIN S14/30S RIBOSOMAL PROTEIN S11"/>
    <property type="match status" value="1"/>
</dbReference>
<dbReference type="Pfam" id="PF00411">
    <property type="entry name" value="Ribosomal_S11"/>
    <property type="match status" value="1"/>
</dbReference>
<dbReference type="PIRSF" id="PIRSF002131">
    <property type="entry name" value="Ribosomal_S11"/>
    <property type="match status" value="1"/>
</dbReference>
<dbReference type="SUPFAM" id="SSF53137">
    <property type="entry name" value="Translational machinery components"/>
    <property type="match status" value="1"/>
</dbReference>
<dbReference type="PROSITE" id="PS00054">
    <property type="entry name" value="RIBOSOMAL_S11"/>
    <property type="match status" value="1"/>
</dbReference>
<keyword id="KW-0687">Ribonucleoprotein</keyword>
<keyword id="KW-0689">Ribosomal protein</keyword>
<keyword id="KW-0694">RNA-binding</keyword>
<keyword id="KW-0699">rRNA-binding</keyword>
<proteinExistence type="inferred from homology"/>
<comment type="function">
    <text evidence="1">Located on the platform of the 30S subunit, it bridges several disparate RNA helices of the 16S rRNA. Forms part of the Shine-Dalgarno cleft in the 70S ribosome.</text>
</comment>
<comment type="subunit">
    <text evidence="1">Part of the 30S ribosomal subunit. Interacts with proteins S7 and S18. Binds to IF-3.</text>
</comment>
<comment type="similarity">
    <text evidence="1">Belongs to the universal ribosomal protein uS11 family.</text>
</comment>
<feature type="chain" id="PRO_1000141149" description="Small ribosomal subunit protein uS11">
    <location>
        <begin position="1"/>
        <end position="127"/>
    </location>
</feature>
<organism>
    <name type="scientific">Streptococcus pyogenes serotype M49 (strain NZ131)</name>
    <dbReference type="NCBI Taxonomy" id="471876"/>
    <lineage>
        <taxon>Bacteria</taxon>
        <taxon>Bacillati</taxon>
        <taxon>Bacillota</taxon>
        <taxon>Bacilli</taxon>
        <taxon>Lactobacillales</taxon>
        <taxon>Streptococcaceae</taxon>
        <taxon>Streptococcus</taxon>
    </lineage>
</organism>